<accession>Q65DG9</accession>
<accession>Q62NY9</accession>
<name>DLTC_BACLD</name>
<comment type="function">
    <text evidence="1">Carrier protein involved in the D-alanylation of lipoteichoic acid (LTA). The loading of thioester-linked D-alanine onto DltC is catalyzed by D-alanine--D-alanyl carrier protein ligase DltA. The DltC-carried D-alanyl group is further transferred to cell membrane phosphatidylglycerol (PG) by forming an ester bond, probably catalyzed by DltD. D-alanylation of LTA plays an important role in modulating the properties of the cell wall in Gram-positive bacteria, influencing the net charge of the cell wall.</text>
</comment>
<comment type="pathway">
    <text evidence="1">Cell wall biogenesis; lipoteichoic acid biosynthesis.</text>
</comment>
<comment type="subcellular location">
    <subcellularLocation>
        <location evidence="1">Cytoplasm</location>
    </subcellularLocation>
</comment>
<comment type="PTM">
    <text evidence="1">4'-phosphopantetheine is transferred from CoA to a specific serine of apo-DCP.</text>
</comment>
<comment type="similarity">
    <text evidence="1">Belongs to the DltC family.</text>
</comment>
<dbReference type="EMBL" id="CP000002">
    <property type="protein sequence ID" value="AAU25522.1"/>
    <property type="molecule type" value="Genomic_DNA"/>
</dbReference>
<dbReference type="EMBL" id="AE017333">
    <property type="protein sequence ID" value="AAU42895.1"/>
    <property type="molecule type" value="Genomic_DNA"/>
</dbReference>
<dbReference type="RefSeq" id="WP_003186284.1">
    <property type="nucleotide sequence ID" value="NC_006322.1"/>
</dbReference>
<dbReference type="SMR" id="Q65DG9"/>
<dbReference type="STRING" id="279010.BL03932"/>
<dbReference type="GeneID" id="92859346"/>
<dbReference type="KEGG" id="bld:BLi04082"/>
<dbReference type="KEGG" id="bli:BL03932"/>
<dbReference type="eggNOG" id="COG0236">
    <property type="taxonomic scope" value="Bacteria"/>
</dbReference>
<dbReference type="HOGENOM" id="CLU_108696_19_0_9"/>
<dbReference type="UniPathway" id="UPA00556"/>
<dbReference type="Proteomes" id="UP000000606">
    <property type="component" value="Chromosome"/>
</dbReference>
<dbReference type="GO" id="GO:0005737">
    <property type="term" value="C:cytoplasm"/>
    <property type="evidence" value="ECO:0007669"/>
    <property type="project" value="UniProtKB-SubCell"/>
</dbReference>
<dbReference type="GO" id="GO:0036370">
    <property type="term" value="F:D-alanyl carrier activity"/>
    <property type="evidence" value="ECO:0007669"/>
    <property type="project" value="UniProtKB-UniRule"/>
</dbReference>
<dbReference type="GO" id="GO:0071555">
    <property type="term" value="P:cell wall organization"/>
    <property type="evidence" value="ECO:0007669"/>
    <property type="project" value="UniProtKB-KW"/>
</dbReference>
<dbReference type="GO" id="GO:0070395">
    <property type="term" value="P:lipoteichoic acid biosynthetic process"/>
    <property type="evidence" value="ECO:0007669"/>
    <property type="project" value="UniProtKB-UniRule"/>
</dbReference>
<dbReference type="Gene3D" id="1.10.1200.10">
    <property type="entry name" value="ACP-like"/>
    <property type="match status" value="1"/>
</dbReference>
<dbReference type="HAMAP" id="MF_00565">
    <property type="entry name" value="DltC"/>
    <property type="match status" value="1"/>
</dbReference>
<dbReference type="InterPro" id="IPR036736">
    <property type="entry name" value="ACP-like_sf"/>
</dbReference>
<dbReference type="InterPro" id="IPR003230">
    <property type="entry name" value="DltC"/>
</dbReference>
<dbReference type="InterPro" id="IPR009081">
    <property type="entry name" value="PP-bd_ACP"/>
</dbReference>
<dbReference type="NCBIfam" id="TIGR01688">
    <property type="entry name" value="dltC"/>
    <property type="match status" value="1"/>
</dbReference>
<dbReference type="NCBIfam" id="NF003464">
    <property type="entry name" value="PRK05087.1"/>
    <property type="match status" value="1"/>
</dbReference>
<dbReference type="Pfam" id="PF00550">
    <property type="entry name" value="PP-binding"/>
    <property type="match status" value="1"/>
</dbReference>
<dbReference type="SUPFAM" id="SSF47336">
    <property type="entry name" value="ACP-like"/>
    <property type="match status" value="1"/>
</dbReference>
<dbReference type="PROSITE" id="PS50075">
    <property type="entry name" value="CARRIER"/>
    <property type="match status" value="1"/>
</dbReference>
<reference key="1">
    <citation type="journal article" date="2004" name="J. Mol. Microbiol. Biotechnol.">
        <title>The complete genome sequence of Bacillus licheniformis DSM13, an organism with great industrial potential.</title>
        <authorList>
            <person name="Veith B."/>
            <person name="Herzberg C."/>
            <person name="Steckel S."/>
            <person name="Feesche J."/>
            <person name="Maurer K.H."/>
            <person name="Ehrenreich P."/>
            <person name="Baeumer S."/>
            <person name="Henne A."/>
            <person name="Liesegang H."/>
            <person name="Merkl R."/>
            <person name="Ehrenreich A."/>
            <person name="Gottschalk G."/>
        </authorList>
    </citation>
    <scope>NUCLEOTIDE SEQUENCE [LARGE SCALE GENOMIC DNA]</scope>
    <source>
        <strain>ATCC 14580 / DSM 13 / JCM 2505 / CCUG 7422 / NBRC 12200 / NCIMB 9375 / NCTC 10341 / NRRL NRS-1264 / Gibson 46</strain>
    </source>
</reference>
<reference key="2">
    <citation type="journal article" date="2004" name="Genome Biol.">
        <title>Complete genome sequence of the industrial bacterium Bacillus licheniformis and comparisons with closely related Bacillus species.</title>
        <authorList>
            <person name="Rey M.W."/>
            <person name="Ramaiya P."/>
            <person name="Nelson B.A."/>
            <person name="Brody-Karpin S.D."/>
            <person name="Zaretsky E.J."/>
            <person name="Tang M."/>
            <person name="Lopez de Leon A."/>
            <person name="Xiang H."/>
            <person name="Gusti V."/>
            <person name="Clausen I.G."/>
            <person name="Olsen P.B."/>
            <person name="Rasmussen M.D."/>
            <person name="Andersen J.T."/>
            <person name="Joergensen P.L."/>
            <person name="Larsen T.S."/>
            <person name="Sorokin A."/>
            <person name="Bolotin A."/>
            <person name="Lapidus A."/>
            <person name="Galleron N."/>
            <person name="Ehrlich S.D."/>
            <person name="Berka R.M."/>
        </authorList>
    </citation>
    <scope>NUCLEOTIDE SEQUENCE [LARGE SCALE GENOMIC DNA]</scope>
    <source>
        <strain>ATCC 14580 / DSM 13 / JCM 2505 / CCUG 7422 / NBRC 12200 / NCIMB 9375 / NCTC 10341 / NRRL NRS-1264 / Gibson 46</strain>
    </source>
</reference>
<gene>
    <name evidence="1" type="primary">dltC</name>
    <name type="ordered locus">BLi04082</name>
    <name type="ordered locus">BL03932</name>
</gene>
<sequence length="78" mass="8997">MDFNQEVLSVLAEVCQDDIVKENPDIDIFEEGILDSFGTVELLLAFESHFNITVPITEFDRDAWNTPNQIIKQLNELR</sequence>
<keyword id="KW-0961">Cell wall biogenesis/degradation</keyword>
<keyword id="KW-0963">Cytoplasm</keyword>
<keyword id="KW-0596">Phosphopantetheine</keyword>
<keyword id="KW-0597">Phosphoprotein</keyword>
<keyword id="KW-1185">Reference proteome</keyword>
<proteinExistence type="inferred from homology"/>
<protein>
    <recommendedName>
        <fullName evidence="1">D-alanyl carrier protein</fullName>
        <shortName evidence="1">DCP</shortName>
    </recommendedName>
    <alternativeName>
        <fullName evidence="1">D-alanine--poly(phosphoribitol) ligase subunit 2</fullName>
    </alternativeName>
</protein>
<evidence type="ECO:0000255" key="1">
    <source>
        <dbReference type="HAMAP-Rule" id="MF_00565"/>
    </source>
</evidence>
<organism>
    <name type="scientific">Bacillus licheniformis (strain ATCC 14580 / DSM 13 / JCM 2505 / CCUG 7422 / NBRC 12200 / NCIMB 9375 / NCTC 10341 / NRRL NRS-1264 / Gibson 46)</name>
    <dbReference type="NCBI Taxonomy" id="279010"/>
    <lineage>
        <taxon>Bacteria</taxon>
        <taxon>Bacillati</taxon>
        <taxon>Bacillota</taxon>
        <taxon>Bacilli</taxon>
        <taxon>Bacillales</taxon>
        <taxon>Bacillaceae</taxon>
        <taxon>Bacillus</taxon>
    </lineage>
</organism>
<feature type="chain" id="PRO_1000024912" description="D-alanyl carrier protein">
    <location>
        <begin position="1"/>
        <end position="78"/>
    </location>
</feature>
<feature type="domain" description="Carrier" evidence="1">
    <location>
        <begin position="1"/>
        <end position="78"/>
    </location>
</feature>
<feature type="modified residue" description="O-(pantetheine 4'-phosphoryl)serine" evidence="1">
    <location>
        <position position="36"/>
    </location>
</feature>